<gene>
    <name evidence="1" type="primary">rpmJ</name>
    <name type="ordered locus">Ldb0419</name>
</gene>
<organism>
    <name type="scientific">Lactobacillus delbrueckii subsp. bulgaricus (strain ATCC 11842 / DSM 20081 / BCRC 10696 / JCM 1002 / NBRC 13953 / NCIMB 11778 / NCTC 12712 / WDCM 00102 / Lb 14)</name>
    <dbReference type="NCBI Taxonomy" id="390333"/>
    <lineage>
        <taxon>Bacteria</taxon>
        <taxon>Bacillati</taxon>
        <taxon>Bacillota</taxon>
        <taxon>Bacilli</taxon>
        <taxon>Lactobacillales</taxon>
        <taxon>Lactobacillaceae</taxon>
        <taxon>Lactobacillus</taxon>
    </lineage>
</organism>
<protein>
    <recommendedName>
        <fullName evidence="1">Large ribosomal subunit protein bL36</fullName>
    </recommendedName>
    <alternativeName>
        <fullName evidence="2">50S ribosomal protein L36</fullName>
    </alternativeName>
</protein>
<feature type="chain" id="PRO_0000302223" description="Large ribosomal subunit protein bL36">
    <location>
        <begin position="1"/>
        <end position="38"/>
    </location>
</feature>
<keyword id="KW-1185">Reference proteome</keyword>
<keyword id="KW-0687">Ribonucleoprotein</keyword>
<keyword id="KW-0689">Ribosomal protein</keyword>
<name>RL36_LACDA</name>
<comment type="similarity">
    <text evidence="1">Belongs to the bacterial ribosomal protein bL36 family.</text>
</comment>
<dbReference type="EMBL" id="CR954253">
    <property type="protein sequence ID" value="CAI97254.1"/>
    <property type="molecule type" value="Genomic_DNA"/>
</dbReference>
<dbReference type="RefSeq" id="WP_002878160.1">
    <property type="nucleotide sequence ID" value="NZ_JQAV01000001.1"/>
</dbReference>
<dbReference type="SMR" id="Q1GBJ5"/>
<dbReference type="STRING" id="390333.Ldb0419"/>
<dbReference type="GeneID" id="93290578"/>
<dbReference type="KEGG" id="ldb:Ldb0419"/>
<dbReference type="eggNOG" id="COG0257">
    <property type="taxonomic scope" value="Bacteria"/>
</dbReference>
<dbReference type="HOGENOM" id="CLU_135723_6_2_9"/>
<dbReference type="BioCyc" id="LDEL390333:LDB_RS09880-MONOMER"/>
<dbReference type="Proteomes" id="UP000001259">
    <property type="component" value="Chromosome"/>
</dbReference>
<dbReference type="GO" id="GO:0005737">
    <property type="term" value="C:cytoplasm"/>
    <property type="evidence" value="ECO:0007669"/>
    <property type="project" value="UniProtKB-ARBA"/>
</dbReference>
<dbReference type="GO" id="GO:1990904">
    <property type="term" value="C:ribonucleoprotein complex"/>
    <property type="evidence" value="ECO:0007669"/>
    <property type="project" value="UniProtKB-KW"/>
</dbReference>
<dbReference type="GO" id="GO:0005840">
    <property type="term" value="C:ribosome"/>
    <property type="evidence" value="ECO:0007669"/>
    <property type="project" value="UniProtKB-KW"/>
</dbReference>
<dbReference type="GO" id="GO:0003735">
    <property type="term" value="F:structural constituent of ribosome"/>
    <property type="evidence" value="ECO:0007669"/>
    <property type="project" value="InterPro"/>
</dbReference>
<dbReference type="GO" id="GO:0006412">
    <property type="term" value="P:translation"/>
    <property type="evidence" value="ECO:0007669"/>
    <property type="project" value="UniProtKB-UniRule"/>
</dbReference>
<dbReference type="HAMAP" id="MF_00251">
    <property type="entry name" value="Ribosomal_bL36"/>
    <property type="match status" value="1"/>
</dbReference>
<dbReference type="InterPro" id="IPR000473">
    <property type="entry name" value="Ribosomal_bL36"/>
</dbReference>
<dbReference type="InterPro" id="IPR035977">
    <property type="entry name" value="Ribosomal_bL36_sp"/>
</dbReference>
<dbReference type="NCBIfam" id="TIGR01022">
    <property type="entry name" value="rpmJ_bact"/>
    <property type="match status" value="1"/>
</dbReference>
<dbReference type="PANTHER" id="PTHR42888">
    <property type="entry name" value="50S RIBOSOMAL PROTEIN L36, CHLOROPLASTIC"/>
    <property type="match status" value="1"/>
</dbReference>
<dbReference type="PANTHER" id="PTHR42888:SF1">
    <property type="entry name" value="LARGE RIBOSOMAL SUBUNIT PROTEIN BL36C"/>
    <property type="match status" value="1"/>
</dbReference>
<dbReference type="Pfam" id="PF00444">
    <property type="entry name" value="Ribosomal_L36"/>
    <property type="match status" value="1"/>
</dbReference>
<dbReference type="SUPFAM" id="SSF57840">
    <property type="entry name" value="Ribosomal protein L36"/>
    <property type="match status" value="1"/>
</dbReference>
<dbReference type="PROSITE" id="PS00828">
    <property type="entry name" value="RIBOSOMAL_L36"/>
    <property type="match status" value="1"/>
</dbReference>
<sequence>MKVRPSVKPMCEHCKVIKRHGRVMVICPANPKHKQRQG</sequence>
<proteinExistence type="inferred from homology"/>
<accession>Q1GBJ5</accession>
<evidence type="ECO:0000255" key="1">
    <source>
        <dbReference type="HAMAP-Rule" id="MF_00251"/>
    </source>
</evidence>
<evidence type="ECO:0000305" key="2"/>
<reference key="1">
    <citation type="journal article" date="2006" name="Proc. Natl. Acad. Sci. U.S.A.">
        <title>The complete genome sequence of Lactobacillus bulgaricus reveals extensive and ongoing reductive evolution.</title>
        <authorList>
            <person name="van de Guchte M."/>
            <person name="Penaud S."/>
            <person name="Grimaldi C."/>
            <person name="Barbe V."/>
            <person name="Bryson K."/>
            <person name="Nicolas P."/>
            <person name="Robert C."/>
            <person name="Oztas S."/>
            <person name="Mangenot S."/>
            <person name="Couloux A."/>
            <person name="Loux V."/>
            <person name="Dervyn R."/>
            <person name="Bossy R."/>
            <person name="Bolotin A."/>
            <person name="Batto J.-M."/>
            <person name="Walunas T."/>
            <person name="Gibrat J.-F."/>
            <person name="Bessieres P."/>
            <person name="Weissenbach J."/>
            <person name="Ehrlich S.D."/>
            <person name="Maguin E."/>
        </authorList>
    </citation>
    <scope>NUCLEOTIDE SEQUENCE [LARGE SCALE GENOMIC DNA]</scope>
    <source>
        <strain>ATCC 11842 / DSM 20081 / BCRC 10696 / JCM 1002 / NBRC 13953 / NCIMB 11778 / NCTC 12712 / WDCM 00102 / Lb 14</strain>
    </source>
</reference>